<protein>
    <recommendedName>
        <fullName evidence="1">ATP synthase subunit alpha</fullName>
        <ecNumber evidence="1">7.1.2.2</ecNumber>
    </recommendedName>
    <alternativeName>
        <fullName evidence="1">ATP synthase F1 sector subunit alpha</fullName>
    </alternativeName>
    <alternativeName>
        <fullName evidence="1">F-ATPase subunit alpha</fullName>
    </alternativeName>
</protein>
<proteinExistence type="inferred from homology"/>
<organism>
    <name type="scientific">Xanthomonas oryzae pv. oryzae (strain PXO99A)</name>
    <dbReference type="NCBI Taxonomy" id="360094"/>
    <lineage>
        <taxon>Bacteria</taxon>
        <taxon>Pseudomonadati</taxon>
        <taxon>Pseudomonadota</taxon>
        <taxon>Gammaproteobacteria</taxon>
        <taxon>Lysobacterales</taxon>
        <taxon>Lysobacteraceae</taxon>
        <taxon>Xanthomonas</taxon>
    </lineage>
</organism>
<keyword id="KW-0066">ATP synthesis</keyword>
<keyword id="KW-0067">ATP-binding</keyword>
<keyword id="KW-0997">Cell inner membrane</keyword>
<keyword id="KW-1003">Cell membrane</keyword>
<keyword id="KW-0139">CF(1)</keyword>
<keyword id="KW-0375">Hydrogen ion transport</keyword>
<keyword id="KW-0406">Ion transport</keyword>
<keyword id="KW-0472">Membrane</keyword>
<keyword id="KW-0547">Nucleotide-binding</keyword>
<keyword id="KW-1278">Translocase</keyword>
<keyword id="KW-0813">Transport</keyword>
<accession>B2SQB2</accession>
<feature type="chain" id="PRO_1000143453" description="ATP synthase subunit alpha">
    <location>
        <begin position="1"/>
        <end position="515"/>
    </location>
</feature>
<feature type="binding site" evidence="1">
    <location>
        <begin position="171"/>
        <end position="178"/>
    </location>
    <ligand>
        <name>ATP</name>
        <dbReference type="ChEBI" id="CHEBI:30616"/>
    </ligand>
</feature>
<feature type="site" description="Required for activity" evidence="1">
    <location>
        <position position="375"/>
    </location>
</feature>
<reference key="1">
    <citation type="journal article" date="2008" name="BMC Genomics">
        <title>Genome sequence and rapid evolution of the rice pathogen Xanthomonas oryzae pv. oryzae PXO99A.</title>
        <authorList>
            <person name="Salzberg S.L."/>
            <person name="Sommer D.D."/>
            <person name="Schatz M.C."/>
            <person name="Phillippy A.M."/>
            <person name="Rabinowicz P.D."/>
            <person name="Tsuge S."/>
            <person name="Furutani A."/>
            <person name="Ochiai H."/>
            <person name="Delcher A.L."/>
            <person name="Kelley D."/>
            <person name="Madupu R."/>
            <person name="Puiu D."/>
            <person name="Radune D."/>
            <person name="Shumway M."/>
            <person name="Trapnell C."/>
            <person name="Aparna G."/>
            <person name="Jha G."/>
            <person name="Pandey A."/>
            <person name="Patil P.B."/>
            <person name="Ishihara H."/>
            <person name="Meyer D.F."/>
            <person name="Szurek B."/>
            <person name="Verdier V."/>
            <person name="Koebnik R."/>
            <person name="Dow J.M."/>
            <person name="Ryan R.P."/>
            <person name="Hirata H."/>
            <person name="Tsuyumu S."/>
            <person name="Won Lee S."/>
            <person name="Seo Y.-S."/>
            <person name="Sriariyanum M."/>
            <person name="Ronald P.C."/>
            <person name="Sonti R.V."/>
            <person name="Van Sluys M.-A."/>
            <person name="Leach J.E."/>
            <person name="White F.F."/>
            <person name="Bogdanove A.J."/>
        </authorList>
    </citation>
    <scope>NUCLEOTIDE SEQUENCE [LARGE SCALE GENOMIC DNA]</scope>
    <source>
        <strain>PXO99A</strain>
    </source>
</reference>
<sequence>MATTLNPSEISDLIKTRIEAVKLSAESRNEGSVTSVSDGIVRIFGLADVMQGEMIELPNNTFALALNLERDSVGAVVLGDYENLREGDVAKTTGRILEVPVGPELLGRVVNALGEPIDGKGPLGATQTAPVERVAPGVIWRKSVDQPVQTGYKSVDAMIPIGRGQRELVIGDRQTGKTALAIDAVINQKGTGIKCVYVAIGQKASTVANIVRKLEENGALAHTVVVAATASESAAMQYISPYAGCTMGEYFMDRGEDALIVYDDLSKQAVAYRQISLLLKRPPGREAYPGDVFYLHSRLLERAARVSEDYVEKFTNGAVTGKTGSLTALPIIETQAGDVSAFVPTNVISITDGQIFLETDLFNAGIRPAVNAGISVSRVGGAAQTKIIKKLSGGIRISLAQYRELAAFAQFASDLDEATRKQLERGQRVTELMKQKQYAPMSIANQALSIYAVNEGYLDDVPVNKLLAFEEGLHAHFANTQGELVSKINSTGGWDNDIEASFKKGIQEFKTTGTW</sequence>
<dbReference type="EC" id="7.1.2.2" evidence="1"/>
<dbReference type="EMBL" id="CP000967">
    <property type="protein sequence ID" value="ACD61110.1"/>
    <property type="molecule type" value="Genomic_DNA"/>
</dbReference>
<dbReference type="RefSeq" id="WP_011257623.1">
    <property type="nucleotide sequence ID" value="NC_010717.2"/>
</dbReference>
<dbReference type="SMR" id="B2SQB2"/>
<dbReference type="KEGG" id="xop:PXO_03111"/>
<dbReference type="eggNOG" id="COG0056">
    <property type="taxonomic scope" value="Bacteria"/>
</dbReference>
<dbReference type="HOGENOM" id="CLU_010091_2_1_6"/>
<dbReference type="Proteomes" id="UP000001740">
    <property type="component" value="Chromosome"/>
</dbReference>
<dbReference type="GO" id="GO:0005886">
    <property type="term" value="C:plasma membrane"/>
    <property type="evidence" value="ECO:0007669"/>
    <property type="project" value="UniProtKB-SubCell"/>
</dbReference>
<dbReference type="GO" id="GO:0045259">
    <property type="term" value="C:proton-transporting ATP synthase complex"/>
    <property type="evidence" value="ECO:0007669"/>
    <property type="project" value="UniProtKB-KW"/>
</dbReference>
<dbReference type="GO" id="GO:0043531">
    <property type="term" value="F:ADP binding"/>
    <property type="evidence" value="ECO:0007669"/>
    <property type="project" value="TreeGrafter"/>
</dbReference>
<dbReference type="GO" id="GO:0005524">
    <property type="term" value="F:ATP binding"/>
    <property type="evidence" value="ECO:0007669"/>
    <property type="project" value="UniProtKB-UniRule"/>
</dbReference>
<dbReference type="GO" id="GO:0046933">
    <property type="term" value="F:proton-transporting ATP synthase activity, rotational mechanism"/>
    <property type="evidence" value="ECO:0007669"/>
    <property type="project" value="UniProtKB-UniRule"/>
</dbReference>
<dbReference type="CDD" id="cd18113">
    <property type="entry name" value="ATP-synt_F1_alpha_C"/>
    <property type="match status" value="1"/>
</dbReference>
<dbReference type="CDD" id="cd18116">
    <property type="entry name" value="ATP-synt_F1_alpha_N"/>
    <property type="match status" value="1"/>
</dbReference>
<dbReference type="CDD" id="cd01132">
    <property type="entry name" value="F1-ATPase_alpha_CD"/>
    <property type="match status" value="1"/>
</dbReference>
<dbReference type="FunFam" id="1.20.150.20:FF:000001">
    <property type="entry name" value="ATP synthase subunit alpha"/>
    <property type="match status" value="1"/>
</dbReference>
<dbReference type="FunFam" id="2.40.30.20:FF:000001">
    <property type="entry name" value="ATP synthase subunit alpha"/>
    <property type="match status" value="1"/>
</dbReference>
<dbReference type="FunFam" id="3.40.50.300:FF:000002">
    <property type="entry name" value="ATP synthase subunit alpha"/>
    <property type="match status" value="1"/>
</dbReference>
<dbReference type="Gene3D" id="2.40.30.20">
    <property type="match status" value="1"/>
</dbReference>
<dbReference type="Gene3D" id="1.20.150.20">
    <property type="entry name" value="ATP synthase alpha/beta chain, C-terminal domain"/>
    <property type="match status" value="1"/>
</dbReference>
<dbReference type="Gene3D" id="3.40.50.300">
    <property type="entry name" value="P-loop containing nucleotide triphosphate hydrolases"/>
    <property type="match status" value="1"/>
</dbReference>
<dbReference type="HAMAP" id="MF_01346">
    <property type="entry name" value="ATP_synth_alpha_bact"/>
    <property type="match status" value="1"/>
</dbReference>
<dbReference type="InterPro" id="IPR023366">
    <property type="entry name" value="ATP_synth_asu-like_sf"/>
</dbReference>
<dbReference type="InterPro" id="IPR000793">
    <property type="entry name" value="ATP_synth_asu_C"/>
</dbReference>
<dbReference type="InterPro" id="IPR038376">
    <property type="entry name" value="ATP_synth_asu_C_sf"/>
</dbReference>
<dbReference type="InterPro" id="IPR033732">
    <property type="entry name" value="ATP_synth_F1_a_nt-bd_dom"/>
</dbReference>
<dbReference type="InterPro" id="IPR005294">
    <property type="entry name" value="ATP_synth_F1_asu"/>
</dbReference>
<dbReference type="InterPro" id="IPR020003">
    <property type="entry name" value="ATPase_a/bsu_AS"/>
</dbReference>
<dbReference type="InterPro" id="IPR004100">
    <property type="entry name" value="ATPase_F1/V1/A1_a/bsu_N"/>
</dbReference>
<dbReference type="InterPro" id="IPR036121">
    <property type="entry name" value="ATPase_F1/V1/A1_a/bsu_N_sf"/>
</dbReference>
<dbReference type="InterPro" id="IPR000194">
    <property type="entry name" value="ATPase_F1/V1/A1_a/bsu_nucl-bd"/>
</dbReference>
<dbReference type="InterPro" id="IPR027417">
    <property type="entry name" value="P-loop_NTPase"/>
</dbReference>
<dbReference type="NCBIfam" id="TIGR00962">
    <property type="entry name" value="atpA"/>
    <property type="match status" value="1"/>
</dbReference>
<dbReference type="NCBIfam" id="NF009884">
    <property type="entry name" value="PRK13343.1"/>
    <property type="match status" value="1"/>
</dbReference>
<dbReference type="PANTHER" id="PTHR48082">
    <property type="entry name" value="ATP SYNTHASE SUBUNIT ALPHA, MITOCHONDRIAL"/>
    <property type="match status" value="1"/>
</dbReference>
<dbReference type="PANTHER" id="PTHR48082:SF2">
    <property type="entry name" value="ATP SYNTHASE SUBUNIT ALPHA, MITOCHONDRIAL"/>
    <property type="match status" value="1"/>
</dbReference>
<dbReference type="Pfam" id="PF00006">
    <property type="entry name" value="ATP-synt_ab"/>
    <property type="match status" value="1"/>
</dbReference>
<dbReference type="Pfam" id="PF00306">
    <property type="entry name" value="ATP-synt_ab_C"/>
    <property type="match status" value="1"/>
</dbReference>
<dbReference type="Pfam" id="PF02874">
    <property type="entry name" value="ATP-synt_ab_N"/>
    <property type="match status" value="1"/>
</dbReference>
<dbReference type="SUPFAM" id="SSF47917">
    <property type="entry name" value="C-terminal domain of alpha and beta subunits of F1 ATP synthase"/>
    <property type="match status" value="1"/>
</dbReference>
<dbReference type="SUPFAM" id="SSF50615">
    <property type="entry name" value="N-terminal domain of alpha and beta subunits of F1 ATP synthase"/>
    <property type="match status" value="1"/>
</dbReference>
<dbReference type="SUPFAM" id="SSF52540">
    <property type="entry name" value="P-loop containing nucleoside triphosphate hydrolases"/>
    <property type="match status" value="1"/>
</dbReference>
<dbReference type="PROSITE" id="PS00152">
    <property type="entry name" value="ATPASE_ALPHA_BETA"/>
    <property type="match status" value="1"/>
</dbReference>
<evidence type="ECO:0000255" key="1">
    <source>
        <dbReference type="HAMAP-Rule" id="MF_01346"/>
    </source>
</evidence>
<gene>
    <name evidence="1" type="primary">atpA</name>
    <name type="ordered locus">PXO_03111</name>
</gene>
<name>ATPA_XANOP</name>
<comment type="function">
    <text evidence="1">Produces ATP from ADP in the presence of a proton gradient across the membrane. The alpha chain is a regulatory subunit.</text>
</comment>
<comment type="catalytic activity">
    <reaction evidence="1">
        <text>ATP + H2O + 4 H(+)(in) = ADP + phosphate + 5 H(+)(out)</text>
        <dbReference type="Rhea" id="RHEA:57720"/>
        <dbReference type="ChEBI" id="CHEBI:15377"/>
        <dbReference type="ChEBI" id="CHEBI:15378"/>
        <dbReference type="ChEBI" id="CHEBI:30616"/>
        <dbReference type="ChEBI" id="CHEBI:43474"/>
        <dbReference type="ChEBI" id="CHEBI:456216"/>
        <dbReference type="EC" id="7.1.2.2"/>
    </reaction>
</comment>
<comment type="subunit">
    <text evidence="1">F-type ATPases have 2 components, CF(1) - the catalytic core - and CF(0) - the membrane proton channel. CF(1) has five subunits: alpha(3), beta(3), gamma(1), delta(1), epsilon(1). CF(0) has three main subunits: a(1), b(2) and c(9-12). The alpha and beta chains form an alternating ring which encloses part of the gamma chain. CF(1) is attached to CF(0) by a central stalk formed by the gamma and epsilon chains, while a peripheral stalk is formed by the delta and b chains.</text>
</comment>
<comment type="subcellular location">
    <subcellularLocation>
        <location evidence="1">Cell inner membrane</location>
        <topology evidence="1">Peripheral membrane protein</topology>
    </subcellularLocation>
</comment>
<comment type="similarity">
    <text evidence="1">Belongs to the ATPase alpha/beta chains family.</text>
</comment>